<protein>
    <recommendedName>
        <fullName evidence="1">Photosystem II reaction center protein K</fullName>
        <shortName evidence="1">PSII-K</shortName>
    </recommendedName>
</protein>
<geneLocation type="chloroplast"/>
<sequence length="58" mass="6655">MLVISNVYPSNLFTLINPFFAKLPEAYAIFDPIVDVMPIIPVFFFLLAFVWQAAVSFR</sequence>
<organism>
    <name type="scientific">Psilotum nudum</name>
    <name type="common">Whisk fern</name>
    <name type="synonym">Lycopodium nudum</name>
    <dbReference type="NCBI Taxonomy" id="3240"/>
    <lineage>
        <taxon>Eukaryota</taxon>
        <taxon>Viridiplantae</taxon>
        <taxon>Streptophyta</taxon>
        <taxon>Embryophyta</taxon>
        <taxon>Tracheophyta</taxon>
        <taxon>Polypodiopsida</taxon>
        <taxon>Ophioglossidae</taxon>
        <taxon>Psilotales</taxon>
        <taxon>Psilotaceae</taxon>
        <taxon>Psilotum</taxon>
    </lineage>
</organism>
<accession>Q8WI34</accession>
<gene>
    <name evidence="1" type="primary">psbK</name>
</gene>
<proteinExistence type="inferred from homology"/>
<keyword id="KW-0150">Chloroplast</keyword>
<keyword id="KW-0472">Membrane</keyword>
<keyword id="KW-0602">Photosynthesis</keyword>
<keyword id="KW-0604">Photosystem II</keyword>
<keyword id="KW-0934">Plastid</keyword>
<keyword id="KW-0674">Reaction center</keyword>
<keyword id="KW-0793">Thylakoid</keyword>
<keyword id="KW-0812">Transmembrane</keyword>
<keyword id="KW-1133">Transmembrane helix</keyword>
<evidence type="ECO:0000255" key="1">
    <source>
        <dbReference type="HAMAP-Rule" id="MF_00441"/>
    </source>
</evidence>
<reference key="1">
    <citation type="journal article" date="2004" name="Mol. Biol. Evol.">
        <title>Chloroplast phylogeny indicates that bryophytes are monophyletic.</title>
        <authorList>
            <person name="Nishiyama T."/>
            <person name="Wolf P.G."/>
            <person name="Kugita M."/>
            <person name="Sinclair R.B."/>
            <person name="Sugita M."/>
            <person name="Sugiura C."/>
            <person name="Wakasugi T."/>
            <person name="Yamada K."/>
            <person name="Yoshinaga K."/>
            <person name="Yamaguchi K."/>
            <person name="Ueda K."/>
            <person name="Hasebe M."/>
        </authorList>
    </citation>
    <scope>NUCLEOTIDE SEQUENCE [LARGE SCALE GENOMIC DNA]</scope>
    <source>
        <strain>Kingyoku</strain>
    </source>
</reference>
<feature type="propeptide" id="PRO_0000029517" evidence="1">
    <location>
        <begin position="1"/>
        <end position="21"/>
    </location>
</feature>
<feature type="chain" id="PRO_0000029518" description="Photosystem II reaction center protein K" evidence="1">
    <location>
        <begin position="22"/>
        <end position="58"/>
    </location>
</feature>
<feature type="transmembrane region" description="Helical" evidence="1">
    <location>
        <begin position="29"/>
        <end position="49"/>
    </location>
</feature>
<comment type="function">
    <text evidence="1">One of the components of the core complex of photosystem II (PSII). PSII is a light-driven water:plastoquinone oxidoreductase that uses light energy to abstract electrons from H(2)O, generating O(2) and a proton gradient subsequently used for ATP formation. It consists of a core antenna complex that captures photons, and an electron transfer chain that converts photonic excitation into a charge separation.</text>
</comment>
<comment type="subunit">
    <text evidence="1">PSII is composed of 1 copy each of membrane proteins PsbA, PsbB, PsbC, PsbD, PsbE, PsbF, PsbH, PsbI, PsbJ, PsbK, PsbL, PsbM, PsbT, PsbX, PsbY, PsbZ, Psb30/Ycf12, at least 3 peripheral proteins of the oxygen-evolving complex and a large number of cofactors. It forms dimeric complexes.</text>
</comment>
<comment type="subcellular location">
    <subcellularLocation>
        <location evidence="1">Plastid</location>
        <location evidence="1">Chloroplast thylakoid membrane</location>
        <topology evidence="1">Single-pass membrane protein</topology>
    </subcellularLocation>
</comment>
<comment type="similarity">
    <text evidence="1">Belongs to the PsbK family.</text>
</comment>
<name>PSBK_PSINU</name>
<dbReference type="EMBL" id="AP004638">
    <property type="protein sequence ID" value="BAB84197.1"/>
    <property type="molecule type" value="Genomic_DNA"/>
</dbReference>
<dbReference type="RefSeq" id="NP_569610.1">
    <property type="nucleotide sequence ID" value="NC_003386.1"/>
</dbReference>
<dbReference type="SMR" id="Q8WI34"/>
<dbReference type="GeneID" id="2545147"/>
<dbReference type="GO" id="GO:0009535">
    <property type="term" value="C:chloroplast thylakoid membrane"/>
    <property type="evidence" value="ECO:0007669"/>
    <property type="project" value="UniProtKB-SubCell"/>
</dbReference>
<dbReference type="GO" id="GO:0009539">
    <property type="term" value="C:photosystem II reaction center"/>
    <property type="evidence" value="ECO:0007669"/>
    <property type="project" value="InterPro"/>
</dbReference>
<dbReference type="GO" id="GO:0015979">
    <property type="term" value="P:photosynthesis"/>
    <property type="evidence" value="ECO:0007669"/>
    <property type="project" value="UniProtKB-UniRule"/>
</dbReference>
<dbReference type="HAMAP" id="MF_00441">
    <property type="entry name" value="PSII_PsbK"/>
    <property type="match status" value="1"/>
</dbReference>
<dbReference type="InterPro" id="IPR003687">
    <property type="entry name" value="PSII_PsbK"/>
</dbReference>
<dbReference type="InterPro" id="IPR037270">
    <property type="entry name" value="PSII_PsbK_sf"/>
</dbReference>
<dbReference type="NCBIfam" id="NF002715">
    <property type="entry name" value="PRK02553.1"/>
    <property type="match status" value="1"/>
</dbReference>
<dbReference type="PANTHER" id="PTHR35325">
    <property type="match status" value="1"/>
</dbReference>
<dbReference type="PANTHER" id="PTHR35325:SF1">
    <property type="entry name" value="PHOTOSYSTEM II REACTION CENTER PROTEIN K"/>
    <property type="match status" value="1"/>
</dbReference>
<dbReference type="Pfam" id="PF02533">
    <property type="entry name" value="PsbK"/>
    <property type="match status" value="1"/>
</dbReference>
<dbReference type="SUPFAM" id="SSF161037">
    <property type="entry name" value="Photosystem II reaction center protein K, PsbK"/>
    <property type="match status" value="1"/>
</dbReference>